<evidence type="ECO:0000255" key="1">
    <source>
        <dbReference type="HAMAP-Rule" id="MF_00605"/>
    </source>
</evidence>
<sequence>MKIDILTLFPEMFSPLEHSIVGKAREKGLLDIQYHNFRENAEKARHVDDEPYGGGQGMLLRAQPIFDSFDAIEKKNPRVILLDPAGKQFDQAYAEDLAQEEELIFICGHYEGYDERIKTLVTDEISLGDYVLTGGELAAMTMIDATVRLIPEVIGKESSHQDDSFSSGLLEYPQYTRPYDYRGMVVPDVLMSGHHEKIRQWRLYESLKKTYERRPDLLEHYQLTVEEEKMLAEIKENKE</sequence>
<protein>
    <recommendedName>
        <fullName evidence="1">tRNA (guanine-N(1)-)-methyltransferase</fullName>
        <ecNumber evidence="1">2.1.1.228</ecNumber>
    </recommendedName>
    <alternativeName>
        <fullName evidence="1">M1G-methyltransferase</fullName>
    </alternativeName>
    <alternativeName>
        <fullName evidence="1">tRNA [GM37] methyltransferase</fullName>
    </alternativeName>
</protein>
<name>TRMD_STRP7</name>
<feature type="chain" id="PRO_1000198586" description="tRNA (guanine-N(1)-)-methyltransferase">
    <location>
        <begin position="1"/>
        <end position="239"/>
    </location>
</feature>
<feature type="binding site" evidence="1">
    <location>
        <position position="108"/>
    </location>
    <ligand>
        <name>S-adenosyl-L-methionine</name>
        <dbReference type="ChEBI" id="CHEBI:59789"/>
    </ligand>
</feature>
<feature type="binding site" evidence="1">
    <location>
        <begin position="127"/>
        <end position="132"/>
    </location>
    <ligand>
        <name>S-adenosyl-L-methionine</name>
        <dbReference type="ChEBI" id="CHEBI:59789"/>
    </ligand>
</feature>
<keyword id="KW-0963">Cytoplasm</keyword>
<keyword id="KW-0489">Methyltransferase</keyword>
<keyword id="KW-0949">S-adenosyl-L-methionine</keyword>
<keyword id="KW-0808">Transferase</keyword>
<keyword id="KW-0819">tRNA processing</keyword>
<comment type="function">
    <text evidence="1">Specifically methylates guanosine-37 in various tRNAs.</text>
</comment>
<comment type="catalytic activity">
    <reaction evidence="1">
        <text>guanosine(37) in tRNA + S-adenosyl-L-methionine = N(1)-methylguanosine(37) in tRNA + S-adenosyl-L-homocysteine + H(+)</text>
        <dbReference type="Rhea" id="RHEA:36899"/>
        <dbReference type="Rhea" id="RHEA-COMP:10145"/>
        <dbReference type="Rhea" id="RHEA-COMP:10147"/>
        <dbReference type="ChEBI" id="CHEBI:15378"/>
        <dbReference type="ChEBI" id="CHEBI:57856"/>
        <dbReference type="ChEBI" id="CHEBI:59789"/>
        <dbReference type="ChEBI" id="CHEBI:73542"/>
        <dbReference type="ChEBI" id="CHEBI:74269"/>
        <dbReference type="EC" id="2.1.1.228"/>
    </reaction>
</comment>
<comment type="subunit">
    <text evidence="1">Homodimer.</text>
</comment>
<comment type="subcellular location">
    <subcellularLocation>
        <location evidence="1">Cytoplasm</location>
    </subcellularLocation>
</comment>
<comment type="similarity">
    <text evidence="1">Belongs to the RNA methyltransferase TrmD family.</text>
</comment>
<proteinExistence type="inferred from homology"/>
<reference key="1">
    <citation type="journal article" date="2010" name="Genome Biol.">
        <title>Structure and dynamics of the pan-genome of Streptococcus pneumoniae and closely related species.</title>
        <authorList>
            <person name="Donati C."/>
            <person name="Hiller N.L."/>
            <person name="Tettelin H."/>
            <person name="Muzzi A."/>
            <person name="Croucher N.J."/>
            <person name="Angiuoli S.V."/>
            <person name="Oggioni M."/>
            <person name="Dunning Hotopp J.C."/>
            <person name="Hu F.Z."/>
            <person name="Riley D.R."/>
            <person name="Covacci A."/>
            <person name="Mitchell T.J."/>
            <person name="Bentley S.D."/>
            <person name="Kilian M."/>
            <person name="Ehrlich G.D."/>
            <person name="Rappuoli R."/>
            <person name="Moxon E.R."/>
            <person name="Masignani V."/>
        </authorList>
    </citation>
    <scope>NUCLEOTIDE SEQUENCE [LARGE SCALE GENOMIC DNA]</scope>
    <source>
        <strain>70585</strain>
    </source>
</reference>
<accession>C1C6C0</accession>
<dbReference type="EC" id="2.1.1.228" evidence="1"/>
<dbReference type="EMBL" id="CP000918">
    <property type="protein sequence ID" value="ACO17400.1"/>
    <property type="molecule type" value="Genomic_DNA"/>
</dbReference>
<dbReference type="RefSeq" id="WP_000686921.1">
    <property type="nucleotide sequence ID" value="NC_012468.1"/>
</dbReference>
<dbReference type="SMR" id="C1C6C0"/>
<dbReference type="KEGG" id="snm:SP70585_0821"/>
<dbReference type="HOGENOM" id="CLU_047363_0_1_9"/>
<dbReference type="Proteomes" id="UP000002211">
    <property type="component" value="Chromosome"/>
</dbReference>
<dbReference type="GO" id="GO:0005829">
    <property type="term" value="C:cytosol"/>
    <property type="evidence" value="ECO:0007669"/>
    <property type="project" value="TreeGrafter"/>
</dbReference>
<dbReference type="GO" id="GO:0052906">
    <property type="term" value="F:tRNA (guanine(37)-N1)-methyltransferase activity"/>
    <property type="evidence" value="ECO:0007669"/>
    <property type="project" value="UniProtKB-UniRule"/>
</dbReference>
<dbReference type="GO" id="GO:0002939">
    <property type="term" value="P:tRNA N1-guanine methylation"/>
    <property type="evidence" value="ECO:0007669"/>
    <property type="project" value="TreeGrafter"/>
</dbReference>
<dbReference type="CDD" id="cd18080">
    <property type="entry name" value="TrmD-like"/>
    <property type="match status" value="1"/>
</dbReference>
<dbReference type="FunFam" id="1.10.1270.20:FF:000001">
    <property type="entry name" value="tRNA (guanine-N(1)-)-methyltransferase"/>
    <property type="match status" value="1"/>
</dbReference>
<dbReference type="FunFam" id="3.40.1280.10:FF:000001">
    <property type="entry name" value="tRNA (guanine-N(1)-)-methyltransferase"/>
    <property type="match status" value="1"/>
</dbReference>
<dbReference type="Gene3D" id="3.40.1280.10">
    <property type="match status" value="1"/>
</dbReference>
<dbReference type="Gene3D" id="1.10.1270.20">
    <property type="entry name" value="tRNA(m1g37)methyltransferase, domain 2"/>
    <property type="match status" value="1"/>
</dbReference>
<dbReference type="HAMAP" id="MF_00605">
    <property type="entry name" value="TrmD"/>
    <property type="match status" value="1"/>
</dbReference>
<dbReference type="InterPro" id="IPR029028">
    <property type="entry name" value="Alpha/beta_knot_MTases"/>
</dbReference>
<dbReference type="InterPro" id="IPR023148">
    <property type="entry name" value="tRNA_m1G_MeTrfase_C_sf"/>
</dbReference>
<dbReference type="InterPro" id="IPR002649">
    <property type="entry name" value="tRNA_m1G_MeTrfase_TrmD"/>
</dbReference>
<dbReference type="InterPro" id="IPR029026">
    <property type="entry name" value="tRNA_m1G_MTases_N"/>
</dbReference>
<dbReference type="InterPro" id="IPR016009">
    <property type="entry name" value="tRNA_MeTrfase_TRMD/TRM10"/>
</dbReference>
<dbReference type="NCBIfam" id="NF000648">
    <property type="entry name" value="PRK00026.1"/>
    <property type="match status" value="1"/>
</dbReference>
<dbReference type="NCBIfam" id="TIGR00088">
    <property type="entry name" value="trmD"/>
    <property type="match status" value="1"/>
</dbReference>
<dbReference type="PANTHER" id="PTHR46417">
    <property type="entry name" value="TRNA (GUANINE-N(1)-)-METHYLTRANSFERASE"/>
    <property type="match status" value="1"/>
</dbReference>
<dbReference type="PANTHER" id="PTHR46417:SF1">
    <property type="entry name" value="TRNA (GUANINE-N(1)-)-METHYLTRANSFERASE"/>
    <property type="match status" value="1"/>
</dbReference>
<dbReference type="Pfam" id="PF01746">
    <property type="entry name" value="tRNA_m1G_MT"/>
    <property type="match status" value="1"/>
</dbReference>
<dbReference type="PIRSF" id="PIRSF000386">
    <property type="entry name" value="tRNA_mtase"/>
    <property type="match status" value="1"/>
</dbReference>
<dbReference type="SUPFAM" id="SSF75217">
    <property type="entry name" value="alpha/beta knot"/>
    <property type="match status" value="1"/>
</dbReference>
<organism>
    <name type="scientific">Streptococcus pneumoniae (strain 70585)</name>
    <dbReference type="NCBI Taxonomy" id="488221"/>
    <lineage>
        <taxon>Bacteria</taxon>
        <taxon>Bacillati</taxon>
        <taxon>Bacillota</taxon>
        <taxon>Bacilli</taxon>
        <taxon>Lactobacillales</taxon>
        <taxon>Streptococcaceae</taxon>
        <taxon>Streptococcus</taxon>
    </lineage>
</organism>
<gene>
    <name evidence="1" type="primary">trmD</name>
    <name type="ordered locus">SP70585_0821</name>
</gene>